<sequence>MKVYEGKLNAEGLKFGIVVGRFNEFIVSKLLSGALDCLKRHGAEEDNIDITWVPGAFEIPMISKKMAFSRKYDAVICLGAVIRGSTPHFDYVSSEVSKGVAHVSLESDIPVIFSVLTTDNIEQAIERAGTKSGNKGYDGAMAAIEMANLIRELE</sequence>
<protein>
    <recommendedName>
        <fullName evidence="1">6,7-dimethyl-8-ribityllumazine synthase</fullName>
        <shortName evidence="1">DMRL synthase</shortName>
        <shortName evidence="1">LS</shortName>
        <shortName evidence="1">Lumazine synthase</shortName>
        <ecNumber evidence="1">2.5.1.78</ecNumber>
    </recommendedName>
</protein>
<keyword id="KW-1185">Reference proteome</keyword>
<keyword id="KW-0686">Riboflavin biosynthesis</keyword>
<keyword id="KW-0808">Transferase</keyword>
<accession>A5MZ82</accession>
<dbReference type="EC" id="2.5.1.78" evidence="1"/>
<dbReference type="EMBL" id="CP000673">
    <property type="protein sequence ID" value="EDK34178.1"/>
    <property type="molecule type" value="Genomic_DNA"/>
</dbReference>
<dbReference type="SMR" id="A5MZ82"/>
<dbReference type="STRING" id="431943.CKL_2166"/>
<dbReference type="KEGG" id="ckl:CKL_2166"/>
<dbReference type="eggNOG" id="COG0054">
    <property type="taxonomic scope" value="Bacteria"/>
</dbReference>
<dbReference type="HOGENOM" id="CLU_089358_1_1_9"/>
<dbReference type="UniPathway" id="UPA00275">
    <property type="reaction ID" value="UER00404"/>
</dbReference>
<dbReference type="Proteomes" id="UP000002411">
    <property type="component" value="Chromosome"/>
</dbReference>
<dbReference type="GO" id="GO:0005829">
    <property type="term" value="C:cytosol"/>
    <property type="evidence" value="ECO:0007669"/>
    <property type="project" value="TreeGrafter"/>
</dbReference>
<dbReference type="GO" id="GO:0009349">
    <property type="term" value="C:riboflavin synthase complex"/>
    <property type="evidence" value="ECO:0007669"/>
    <property type="project" value="InterPro"/>
</dbReference>
<dbReference type="GO" id="GO:0000906">
    <property type="term" value="F:6,7-dimethyl-8-ribityllumazine synthase activity"/>
    <property type="evidence" value="ECO:0007669"/>
    <property type="project" value="UniProtKB-UniRule"/>
</dbReference>
<dbReference type="GO" id="GO:0009231">
    <property type="term" value="P:riboflavin biosynthetic process"/>
    <property type="evidence" value="ECO:0007669"/>
    <property type="project" value="UniProtKB-UniRule"/>
</dbReference>
<dbReference type="CDD" id="cd09209">
    <property type="entry name" value="Lumazine_synthase-I"/>
    <property type="match status" value="1"/>
</dbReference>
<dbReference type="FunFam" id="3.40.50.960:FF:000001">
    <property type="entry name" value="6,7-dimethyl-8-ribityllumazine synthase"/>
    <property type="match status" value="1"/>
</dbReference>
<dbReference type="Gene3D" id="3.40.50.960">
    <property type="entry name" value="Lumazine/riboflavin synthase"/>
    <property type="match status" value="1"/>
</dbReference>
<dbReference type="HAMAP" id="MF_00178">
    <property type="entry name" value="Lumazine_synth"/>
    <property type="match status" value="1"/>
</dbReference>
<dbReference type="InterPro" id="IPR034964">
    <property type="entry name" value="LS"/>
</dbReference>
<dbReference type="InterPro" id="IPR002180">
    <property type="entry name" value="LS/RS"/>
</dbReference>
<dbReference type="InterPro" id="IPR036467">
    <property type="entry name" value="LS/RS_sf"/>
</dbReference>
<dbReference type="NCBIfam" id="TIGR00114">
    <property type="entry name" value="lumazine-synth"/>
    <property type="match status" value="1"/>
</dbReference>
<dbReference type="NCBIfam" id="NF000812">
    <property type="entry name" value="PRK00061.1-4"/>
    <property type="match status" value="1"/>
</dbReference>
<dbReference type="PANTHER" id="PTHR21058:SF0">
    <property type="entry name" value="6,7-DIMETHYL-8-RIBITYLLUMAZINE SYNTHASE"/>
    <property type="match status" value="1"/>
</dbReference>
<dbReference type="PANTHER" id="PTHR21058">
    <property type="entry name" value="6,7-DIMETHYL-8-RIBITYLLUMAZINE SYNTHASE DMRL SYNTHASE LUMAZINE SYNTHASE"/>
    <property type="match status" value="1"/>
</dbReference>
<dbReference type="Pfam" id="PF00885">
    <property type="entry name" value="DMRL_synthase"/>
    <property type="match status" value="1"/>
</dbReference>
<dbReference type="SUPFAM" id="SSF52121">
    <property type="entry name" value="Lumazine synthase"/>
    <property type="match status" value="1"/>
</dbReference>
<proteinExistence type="inferred from homology"/>
<name>RISB_CLOK5</name>
<feature type="chain" id="PRO_1000077230" description="6,7-dimethyl-8-ribityllumazine synthase">
    <location>
        <begin position="1"/>
        <end position="154"/>
    </location>
</feature>
<feature type="active site" description="Proton donor" evidence="1">
    <location>
        <position position="88"/>
    </location>
</feature>
<feature type="binding site" evidence="1">
    <location>
        <position position="22"/>
    </location>
    <ligand>
        <name>5-amino-6-(D-ribitylamino)uracil</name>
        <dbReference type="ChEBI" id="CHEBI:15934"/>
    </ligand>
</feature>
<feature type="binding site" evidence="1">
    <location>
        <begin position="56"/>
        <end position="58"/>
    </location>
    <ligand>
        <name>5-amino-6-(D-ribitylamino)uracil</name>
        <dbReference type="ChEBI" id="CHEBI:15934"/>
    </ligand>
</feature>
<feature type="binding site" evidence="1">
    <location>
        <begin position="80"/>
        <end position="82"/>
    </location>
    <ligand>
        <name>5-amino-6-(D-ribitylamino)uracil</name>
        <dbReference type="ChEBI" id="CHEBI:15934"/>
    </ligand>
</feature>
<feature type="binding site" evidence="1">
    <location>
        <begin position="85"/>
        <end position="86"/>
    </location>
    <ligand>
        <name>(2S)-2-hydroxy-3-oxobutyl phosphate</name>
        <dbReference type="ChEBI" id="CHEBI:58830"/>
    </ligand>
</feature>
<feature type="binding site" evidence="1">
    <location>
        <position position="113"/>
    </location>
    <ligand>
        <name>5-amino-6-(D-ribitylamino)uracil</name>
        <dbReference type="ChEBI" id="CHEBI:15934"/>
    </ligand>
</feature>
<feature type="binding site" evidence="1">
    <location>
        <position position="127"/>
    </location>
    <ligand>
        <name>(2S)-2-hydroxy-3-oxobutyl phosphate</name>
        <dbReference type="ChEBI" id="CHEBI:58830"/>
    </ligand>
</feature>
<reference key="1">
    <citation type="journal article" date="2008" name="Proc. Natl. Acad. Sci. U.S.A.">
        <title>The genome of Clostridium kluyveri, a strict anaerobe with unique metabolic features.</title>
        <authorList>
            <person name="Seedorf H."/>
            <person name="Fricke W.F."/>
            <person name="Veith B."/>
            <person name="Brueggemann H."/>
            <person name="Liesegang H."/>
            <person name="Strittmatter A."/>
            <person name="Miethke M."/>
            <person name="Buckel W."/>
            <person name="Hinderberger J."/>
            <person name="Li F."/>
            <person name="Hagemeier C."/>
            <person name="Thauer R.K."/>
            <person name="Gottschalk G."/>
        </authorList>
    </citation>
    <scope>NUCLEOTIDE SEQUENCE [LARGE SCALE GENOMIC DNA]</scope>
    <source>
        <strain>ATCC 8527 / DSM 555 / NBRC 12016 / NCIMB 10680 / K1</strain>
    </source>
</reference>
<evidence type="ECO:0000255" key="1">
    <source>
        <dbReference type="HAMAP-Rule" id="MF_00178"/>
    </source>
</evidence>
<comment type="function">
    <text evidence="1">Catalyzes the formation of 6,7-dimethyl-8-ribityllumazine by condensation of 5-amino-6-(D-ribitylamino)uracil with 3,4-dihydroxy-2-butanone 4-phosphate. This is the penultimate step in the biosynthesis of riboflavin.</text>
</comment>
<comment type="catalytic activity">
    <reaction evidence="1">
        <text>(2S)-2-hydroxy-3-oxobutyl phosphate + 5-amino-6-(D-ribitylamino)uracil = 6,7-dimethyl-8-(1-D-ribityl)lumazine + phosphate + 2 H2O + H(+)</text>
        <dbReference type="Rhea" id="RHEA:26152"/>
        <dbReference type="ChEBI" id="CHEBI:15377"/>
        <dbReference type="ChEBI" id="CHEBI:15378"/>
        <dbReference type="ChEBI" id="CHEBI:15934"/>
        <dbReference type="ChEBI" id="CHEBI:43474"/>
        <dbReference type="ChEBI" id="CHEBI:58201"/>
        <dbReference type="ChEBI" id="CHEBI:58830"/>
        <dbReference type="EC" id="2.5.1.78"/>
    </reaction>
</comment>
<comment type="pathway">
    <text evidence="1">Cofactor biosynthesis; riboflavin biosynthesis; riboflavin from 2-hydroxy-3-oxobutyl phosphate and 5-amino-6-(D-ribitylamino)uracil: step 1/2.</text>
</comment>
<comment type="similarity">
    <text evidence="1">Belongs to the DMRL synthase family.</text>
</comment>
<organism>
    <name type="scientific">Clostridium kluyveri (strain ATCC 8527 / DSM 555 / NBRC 12016 / NCIMB 10680 / K1)</name>
    <dbReference type="NCBI Taxonomy" id="431943"/>
    <lineage>
        <taxon>Bacteria</taxon>
        <taxon>Bacillati</taxon>
        <taxon>Bacillota</taxon>
        <taxon>Clostridia</taxon>
        <taxon>Eubacteriales</taxon>
        <taxon>Clostridiaceae</taxon>
        <taxon>Clostridium</taxon>
    </lineage>
</organism>
<gene>
    <name evidence="1" type="primary">ribH</name>
    <name type="ordered locus">CKL_2166</name>
</gene>